<proteinExistence type="evidence at protein level"/>
<reference key="1">
    <citation type="submission" date="2005-02" db="EMBL/GenBank/DDBJ databases">
        <title>Prediction of the coding sequences of mouse homologues of KIAA gene. The complete nucleotide sequences of mouse KIAA-homologous cDNAs identified by screening of terminal sequences of cDNA clones randomly sampled from size-fractionated libraries.</title>
        <authorList>
            <person name="Okazaki N."/>
            <person name="Kikuno R.F."/>
            <person name="Ohara R."/>
            <person name="Inamoto S."/>
            <person name="Nagase T."/>
            <person name="Ohara O."/>
            <person name="Koga H."/>
        </authorList>
    </citation>
    <scope>NUCLEOTIDE SEQUENCE [LARGE SCALE MRNA]</scope>
    <source>
        <tissue>Fetal brain</tissue>
    </source>
</reference>
<reference key="2">
    <citation type="journal article" date="2005" name="Science">
        <title>The transcriptional landscape of the mammalian genome.</title>
        <authorList>
            <person name="Carninci P."/>
            <person name="Kasukawa T."/>
            <person name="Katayama S."/>
            <person name="Gough J."/>
            <person name="Frith M.C."/>
            <person name="Maeda N."/>
            <person name="Oyama R."/>
            <person name="Ravasi T."/>
            <person name="Lenhard B."/>
            <person name="Wells C."/>
            <person name="Kodzius R."/>
            <person name="Shimokawa K."/>
            <person name="Bajic V.B."/>
            <person name="Brenner S.E."/>
            <person name="Batalov S."/>
            <person name="Forrest A.R."/>
            <person name="Zavolan M."/>
            <person name="Davis M.J."/>
            <person name="Wilming L.G."/>
            <person name="Aidinis V."/>
            <person name="Allen J.E."/>
            <person name="Ambesi-Impiombato A."/>
            <person name="Apweiler R."/>
            <person name="Aturaliya R.N."/>
            <person name="Bailey T.L."/>
            <person name="Bansal M."/>
            <person name="Baxter L."/>
            <person name="Beisel K.W."/>
            <person name="Bersano T."/>
            <person name="Bono H."/>
            <person name="Chalk A.M."/>
            <person name="Chiu K.P."/>
            <person name="Choudhary V."/>
            <person name="Christoffels A."/>
            <person name="Clutterbuck D.R."/>
            <person name="Crowe M.L."/>
            <person name="Dalla E."/>
            <person name="Dalrymple B.P."/>
            <person name="de Bono B."/>
            <person name="Della Gatta G."/>
            <person name="di Bernardo D."/>
            <person name="Down T."/>
            <person name="Engstrom P."/>
            <person name="Fagiolini M."/>
            <person name="Faulkner G."/>
            <person name="Fletcher C.F."/>
            <person name="Fukushima T."/>
            <person name="Furuno M."/>
            <person name="Futaki S."/>
            <person name="Gariboldi M."/>
            <person name="Georgii-Hemming P."/>
            <person name="Gingeras T.R."/>
            <person name="Gojobori T."/>
            <person name="Green R.E."/>
            <person name="Gustincich S."/>
            <person name="Harbers M."/>
            <person name="Hayashi Y."/>
            <person name="Hensch T.K."/>
            <person name="Hirokawa N."/>
            <person name="Hill D."/>
            <person name="Huminiecki L."/>
            <person name="Iacono M."/>
            <person name="Ikeo K."/>
            <person name="Iwama A."/>
            <person name="Ishikawa T."/>
            <person name="Jakt M."/>
            <person name="Kanapin A."/>
            <person name="Katoh M."/>
            <person name="Kawasawa Y."/>
            <person name="Kelso J."/>
            <person name="Kitamura H."/>
            <person name="Kitano H."/>
            <person name="Kollias G."/>
            <person name="Krishnan S.P."/>
            <person name="Kruger A."/>
            <person name="Kummerfeld S.K."/>
            <person name="Kurochkin I.V."/>
            <person name="Lareau L.F."/>
            <person name="Lazarevic D."/>
            <person name="Lipovich L."/>
            <person name="Liu J."/>
            <person name="Liuni S."/>
            <person name="McWilliam S."/>
            <person name="Madan Babu M."/>
            <person name="Madera M."/>
            <person name="Marchionni L."/>
            <person name="Matsuda H."/>
            <person name="Matsuzawa S."/>
            <person name="Miki H."/>
            <person name="Mignone F."/>
            <person name="Miyake S."/>
            <person name="Morris K."/>
            <person name="Mottagui-Tabar S."/>
            <person name="Mulder N."/>
            <person name="Nakano N."/>
            <person name="Nakauchi H."/>
            <person name="Ng P."/>
            <person name="Nilsson R."/>
            <person name="Nishiguchi S."/>
            <person name="Nishikawa S."/>
            <person name="Nori F."/>
            <person name="Ohara O."/>
            <person name="Okazaki Y."/>
            <person name="Orlando V."/>
            <person name="Pang K.C."/>
            <person name="Pavan W.J."/>
            <person name="Pavesi G."/>
            <person name="Pesole G."/>
            <person name="Petrovsky N."/>
            <person name="Piazza S."/>
            <person name="Reed J."/>
            <person name="Reid J.F."/>
            <person name="Ring B.Z."/>
            <person name="Ringwald M."/>
            <person name="Rost B."/>
            <person name="Ruan Y."/>
            <person name="Salzberg S.L."/>
            <person name="Sandelin A."/>
            <person name="Schneider C."/>
            <person name="Schoenbach C."/>
            <person name="Sekiguchi K."/>
            <person name="Semple C.A."/>
            <person name="Seno S."/>
            <person name="Sessa L."/>
            <person name="Sheng Y."/>
            <person name="Shibata Y."/>
            <person name="Shimada H."/>
            <person name="Shimada K."/>
            <person name="Silva D."/>
            <person name="Sinclair B."/>
            <person name="Sperling S."/>
            <person name="Stupka E."/>
            <person name="Sugiura K."/>
            <person name="Sultana R."/>
            <person name="Takenaka Y."/>
            <person name="Taki K."/>
            <person name="Tammoja K."/>
            <person name="Tan S.L."/>
            <person name="Tang S."/>
            <person name="Taylor M.S."/>
            <person name="Tegner J."/>
            <person name="Teichmann S.A."/>
            <person name="Ueda H.R."/>
            <person name="van Nimwegen E."/>
            <person name="Verardo R."/>
            <person name="Wei C.L."/>
            <person name="Yagi K."/>
            <person name="Yamanishi H."/>
            <person name="Zabarovsky E."/>
            <person name="Zhu S."/>
            <person name="Zimmer A."/>
            <person name="Hide W."/>
            <person name="Bult C."/>
            <person name="Grimmond S.M."/>
            <person name="Teasdale R.D."/>
            <person name="Liu E.T."/>
            <person name="Brusic V."/>
            <person name="Quackenbush J."/>
            <person name="Wahlestedt C."/>
            <person name="Mattick J.S."/>
            <person name="Hume D.A."/>
            <person name="Kai C."/>
            <person name="Sasaki D."/>
            <person name="Tomaru Y."/>
            <person name="Fukuda S."/>
            <person name="Kanamori-Katayama M."/>
            <person name="Suzuki M."/>
            <person name="Aoki J."/>
            <person name="Arakawa T."/>
            <person name="Iida J."/>
            <person name="Imamura K."/>
            <person name="Itoh M."/>
            <person name="Kato T."/>
            <person name="Kawaji H."/>
            <person name="Kawagashira N."/>
            <person name="Kawashima T."/>
            <person name="Kojima M."/>
            <person name="Kondo S."/>
            <person name="Konno H."/>
            <person name="Nakano K."/>
            <person name="Ninomiya N."/>
            <person name="Nishio T."/>
            <person name="Okada M."/>
            <person name="Plessy C."/>
            <person name="Shibata K."/>
            <person name="Shiraki T."/>
            <person name="Suzuki S."/>
            <person name="Tagami M."/>
            <person name="Waki K."/>
            <person name="Watahiki A."/>
            <person name="Okamura-Oho Y."/>
            <person name="Suzuki H."/>
            <person name="Kawai J."/>
            <person name="Hayashizaki Y."/>
        </authorList>
    </citation>
    <scope>NUCLEOTIDE SEQUENCE [LARGE SCALE MRNA]</scope>
    <source>
        <strain>C57BL/6J</strain>
        <strain>NOD</strain>
        <tissue>Head</tissue>
        <tissue>Spinal ganglion</tissue>
    </source>
</reference>
<reference key="3">
    <citation type="journal article" date="2009" name="PLoS Biol.">
        <title>Lineage-specific biology revealed by a finished genome assembly of the mouse.</title>
        <authorList>
            <person name="Church D.M."/>
            <person name="Goodstadt L."/>
            <person name="Hillier L.W."/>
            <person name="Zody M.C."/>
            <person name="Goldstein S."/>
            <person name="She X."/>
            <person name="Bult C.J."/>
            <person name="Agarwala R."/>
            <person name="Cherry J.L."/>
            <person name="DiCuccio M."/>
            <person name="Hlavina W."/>
            <person name="Kapustin Y."/>
            <person name="Meric P."/>
            <person name="Maglott D."/>
            <person name="Birtle Z."/>
            <person name="Marques A.C."/>
            <person name="Graves T."/>
            <person name="Zhou S."/>
            <person name="Teague B."/>
            <person name="Potamousis K."/>
            <person name="Churas C."/>
            <person name="Place M."/>
            <person name="Herschleb J."/>
            <person name="Runnheim R."/>
            <person name="Forrest D."/>
            <person name="Amos-Landgraf J."/>
            <person name="Schwartz D.C."/>
            <person name="Cheng Z."/>
            <person name="Lindblad-Toh K."/>
            <person name="Eichler E.E."/>
            <person name="Ponting C.P."/>
        </authorList>
    </citation>
    <scope>NUCLEOTIDE SEQUENCE [LARGE SCALE GENOMIC DNA]</scope>
    <source>
        <strain>C57BL/6J</strain>
        <tissue>Brain</tissue>
    </source>
</reference>
<reference key="4">
    <citation type="journal article" date="2004" name="Genome Res.">
        <title>The status, quality, and expansion of the NIH full-length cDNA project: the Mammalian Gene Collection (MGC).</title>
        <authorList>
            <consortium name="The MGC Project Team"/>
        </authorList>
    </citation>
    <scope>NUCLEOTIDE SEQUENCE [LARGE SCALE MRNA]</scope>
    <source>
        <strain>C57BL/6J</strain>
        <tissue>Embryo</tissue>
    </source>
</reference>
<reference key="5">
    <citation type="journal article" date="2006" name="Gene Expr. Patterns">
        <title>The expression patterns of deubiquitinating enzymes, USP22 and Usp22.</title>
        <authorList>
            <person name="Lee H.-J."/>
            <person name="Kim M.-S."/>
            <person name="Shin J.-M."/>
            <person name="Park T.-J."/>
            <person name="Chung H.-M."/>
            <person name="Baek K.-H."/>
        </authorList>
    </citation>
    <scope>TISSUE SPECIFICITY</scope>
    <scope>DEVELOPMENTAL STAGE</scope>
</reference>
<reference key="6">
    <citation type="journal article" date="2012" name="Mol. Cell">
        <title>USP22 antagonizes p53 transcriptional activation by deubiquitinating Sirt1 to suppress cell apoptosis and is required for mouse embryonic development.</title>
        <authorList>
            <person name="Lin Z."/>
            <person name="Yang H."/>
            <person name="Kong Q."/>
            <person name="Li J."/>
            <person name="Lee S.M."/>
            <person name="Gao B."/>
            <person name="Dong H."/>
            <person name="Wei J."/>
            <person name="Song J."/>
            <person name="Zhang D.D."/>
            <person name="Fang D."/>
        </authorList>
    </citation>
    <scope>FUNCTION</scope>
    <scope>DISRUPTION PHENOTYPE</scope>
</reference>
<reference key="7">
    <citation type="journal article" date="2016" name="EMBO Rep.">
        <title>The deubiquitinase Usp27x stabilizes the BH3-only protein Bim and enhances apoptosis.</title>
        <authorList>
            <person name="Weber A."/>
            <person name="Heinlein M."/>
            <person name="Dengjel J."/>
            <person name="Alber C."/>
            <person name="Singh P.K."/>
            <person name="Haecker G."/>
        </authorList>
    </citation>
    <scope>SUBCELLULAR LOCATION</scope>
</reference>
<reference key="8">
    <citation type="journal article" date="2020" name="J. Exp. Med.">
        <title>USP22 controls iNKT immunity through MED1 suppression of histone H2A monoubiquitination.</title>
        <authorList>
            <person name="Zhang Y."/>
            <person name="Wang Y."/>
            <person name="Gao B."/>
            <person name="Sun Y."/>
            <person name="Cao L."/>
            <person name="Genardi S.M."/>
            <person name="Wang C.R."/>
            <person name="Li H."/>
            <person name="Sun Z."/>
            <person name="Yang Y."/>
            <person name="Fang D."/>
        </authorList>
    </citation>
    <scope>FUNCTION</scope>
    <scope>INTERACTION WITH MED1</scope>
    <scope>DISRUPTION PHENOTYPE</scope>
</reference>
<reference key="9">
    <citation type="journal article" date="2022" name="Mol. Med. Report.">
        <title>USP22 promotes pro-inflammatory responses in Pseudomonas aeruginosa-induced keratitis by targeting TRAF6.</title>
        <authorList>
            <person name="Chen D."/>
            <person name="Song D."/>
            <person name="Ma Y."/>
            <person name="Lu W."/>
            <person name="Qiu J."/>
            <person name="Wang Y."/>
        </authorList>
    </citation>
    <scope>FUNCTION</scope>
</reference>
<reference key="10">
    <citation type="journal article" date="2023" name="Autophagy">
        <title>USP22 suppresses the NLRP3 inflammasome by degrading NLRP3 via ATG5-dependent autophagy.</title>
        <authorList>
            <person name="Di Q."/>
            <person name="Zhao X."/>
            <person name="Tang H."/>
            <person name="Li X."/>
            <person name="Xiao Y."/>
            <person name="Wu H."/>
            <person name="Wu Z."/>
            <person name="Quan J."/>
            <person name="Chen W."/>
        </authorList>
    </citation>
    <scope>FUNCTION</scope>
    <scope>SUBCELLULAR LOCATION</scope>
    <scope>MUTAGENESIS OF CYS-185</scope>
</reference>
<evidence type="ECO:0000250" key="1">
    <source>
        <dbReference type="UniProtKB" id="Q9UPT9"/>
    </source>
</evidence>
<evidence type="ECO:0000255" key="2">
    <source>
        <dbReference type="PROSITE-ProRule" id="PRU00502"/>
    </source>
</evidence>
<evidence type="ECO:0000255" key="3">
    <source>
        <dbReference type="PROSITE-ProRule" id="PRU10092"/>
    </source>
</evidence>
<evidence type="ECO:0000255" key="4">
    <source>
        <dbReference type="PROSITE-ProRule" id="PRU10093"/>
    </source>
</evidence>
<evidence type="ECO:0000269" key="5">
    <source>
    </source>
</evidence>
<evidence type="ECO:0000269" key="6">
    <source>
    </source>
</evidence>
<evidence type="ECO:0000269" key="7">
    <source>
    </source>
</evidence>
<evidence type="ECO:0000269" key="8">
    <source>
    </source>
</evidence>
<evidence type="ECO:0000269" key="9">
    <source>
    </source>
</evidence>
<evidence type="ECO:0000269" key="10">
    <source>
    </source>
</evidence>
<evidence type="ECO:0000305" key="11"/>
<accession>Q5DU02</accession>
<accession>Q3TU34</accession>
<accession>Q3U2W4</accession>
<accession>Q5SU81</accession>
<accession>Q66JV8</accession>
<accession>Q6PDX3</accession>
<accession>Q8BJG3</accession>
<protein>
    <recommendedName>
        <fullName>Ubiquitin carboxyl-terminal hydrolase 22</fullName>
        <ecNumber>3.4.19.12</ecNumber>
    </recommendedName>
    <alternativeName>
        <fullName>Deubiquitinating enzyme 22</fullName>
    </alternativeName>
    <alternativeName>
        <fullName>Ubiquitin thioesterase 22</fullName>
    </alternativeName>
    <alternativeName>
        <fullName>Ubiquitin-specific-processing protease 22</fullName>
    </alternativeName>
</protein>
<comment type="function">
    <text evidence="1 6 8 9 10">Deubiquitinase that plays a role in several cellular processes including transcriptional regulation, cell cycle progression or innate immunity. As part of the transcription regulatory histone acetylation (HAT) complex SAGA, catalyzes the deubiquitination of both histones H2A and H2B, thereby acting as a transcriptional coactivator (PubMed:32069354). Recruited to specific gene promoters by activators such as MYC, where it is required for transcription. Facilitates cell-cycle progression by stabilizing CCNB1 and antagonizing its proteasome-mediated degradation in a cell cycle-specific manner. Modulates cell cycle progression and apoptosis also by antagonizing TP53 transcriptional activation through deacetylase SIRT1 stabilization (PubMed:22542455). Plays multiple roles in immunity and inflammation. Participates in antiviral response by deubiquitinating the importin KPNA2, leading to IRF3 nuclear translocation and subsequent type I interferon production. Acts as a central regulator of type III IFN signaling by negatively regulating STING1 activation and ubiquitination (By similarity). Inhibits NLRP3 inflammasome activation by promoting NLRP3 degradation through ATG5-dependent autophagy (PubMed:35900990). Deubiquitinates CD274 to induce its stabilization and thereby participates in maintenance of immune tolerance to self. Controls necroptotic cell death by regulating RIPK3 phosphorylation and ubiquitination (By similarity). During bacterial infection, promotes pro-inflammatory response by targeting TRAF6 and removing its 'Lys-48'-linked polyubiquitination (PubMed:35244191).</text>
</comment>
<comment type="catalytic activity">
    <reaction evidence="1">
        <text>Thiol-dependent hydrolysis of ester, thioester, amide, peptide and isopeptide bonds formed by the C-terminal Gly of ubiquitin (a 76-residue protein attached to proteins as an intracellular targeting signal).</text>
        <dbReference type="EC" id="3.4.19.12"/>
    </reaction>
</comment>
<comment type="subunit">
    <text evidence="1 8">Component of some SAGA transcription coactivator-HAT complexes, at least composed of ATXN7, ATXN7L3, ENY2, GCN5L2, SUPT3H, TAF10, TRRAP and USP22. Within the SAGA complex, ATXN7L3, ENY2 and USP22 form a subcomplex required for histone deubiquitination. Interacts directly with ATXN7L3; leading to its recruitment to the SAGA complex. Interacts with ATXN7L3 and weakly with ATXN7L3B (By similarity). Interacts with MED1 (PubMed:32069354).</text>
</comment>
<comment type="subcellular location">
    <subcellularLocation>
        <location evidence="7">Nucleus</location>
    </subcellularLocation>
    <subcellularLocation>
        <location evidence="10">Cytoplasm</location>
    </subcellularLocation>
</comment>
<comment type="tissue specificity">
    <text evidence="5">Highly expressed in brain and weakly in other organs.</text>
</comment>
<comment type="developmental stage">
    <text evidence="5">Highly expressed between 10.5 dpc and 12.5 dpc. Expressed in the midbrain, forebrain, hindbrain and dorsal root ganglia of embryos at 12.5 dpc.</text>
</comment>
<comment type="PTM">
    <text evidence="1">Phosphorylated in G2/M phase, but not in G1 phase by CDK1.</text>
</comment>
<comment type="PTM">
    <text evidence="1">Ubiquitinated and subsequently degraded in a CDC20-dependent manner.</text>
</comment>
<comment type="disruption phenotype">
    <text evidence="6">Deletion mutant mice leads to early embryonic lethality.</text>
</comment>
<comment type="similarity">
    <text evidence="11">Belongs to the peptidase C19 family. UBP8 subfamily.</text>
</comment>
<comment type="sequence caution" evidence="11">
    <conflict type="erroneous initiation">
        <sequence resource="EMBL-CDS" id="BAD90248"/>
    </conflict>
</comment>
<keyword id="KW-0007">Acetylation</keyword>
<keyword id="KW-0010">Activator</keyword>
<keyword id="KW-0131">Cell cycle</keyword>
<keyword id="KW-0156">Chromatin regulator</keyword>
<keyword id="KW-0963">Cytoplasm</keyword>
<keyword id="KW-0378">Hydrolase</keyword>
<keyword id="KW-0479">Metal-binding</keyword>
<keyword id="KW-0539">Nucleus</keyword>
<keyword id="KW-0597">Phosphoprotein</keyword>
<keyword id="KW-0645">Protease</keyword>
<keyword id="KW-1185">Reference proteome</keyword>
<keyword id="KW-0788">Thiol protease</keyword>
<keyword id="KW-0804">Transcription</keyword>
<keyword id="KW-0805">Transcription regulation</keyword>
<keyword id="KW-0832">Ubl conjugation</keyword>
<keyword id="KW-0833">Ubl conjugation pathway</keyword>
<keyword id="KW-0862">Zinc</keyword>
<keyword id="KW-0863">Zinc-finger</keyword>
<sequence>MVARPEPEVEAMDAELAVPPPGCSHLGSFKVDNWKQNLRAIYQCFVWSGTAEARKRKAKSCVCHVCGIHLNRLHSCLYCVFFGCFTKKHIHDHAKSKRHNLAIDLMYGGIYCFLCQDYIYDKDIEIIAKEEQRKAWKMQGVGEKFSTWEPTKRELELLKHNPKRRKITSNCTIGLRGLINLGNTCFMNCIVQALTHTPLLRDFFLSDRHRCEMQSPSSCLVCEMSSLFQEFYSGHRSPHIPYKLLHLVWTHARHLAGYEQQDAHEFLIAALDVLHRHCKGDDNGKKANNPNHCNCIIDQIFTGGLQSDVTCQVCHGVSTTIDPFWDISLDLPGSSTPFWPLSPGSEGSVVNGESHASGTTTLTDCLRRFTRPEHLGSSAKIKCSGCHSYQESTKQLTMKKLPIVACFHLKRFEHSAKLRRKITTYVSFPLELDMTPFMASSKESRMNGQYQQPLDSLNNDNKYSLFAVVNHQGTLESGHYTSFIRQHKDQWFKCDDAIITKASIKDVLDSEGYLLFYHKQFLEYE</sequence>
<dbReference type="EC" id="3.4.19.12"/>
<dbReference type="EMBL" id="AK084022">
    <property type="protein sequence ID" value="BAC39100.1"/>
    <property type="molecule type" value="mRNA"/>
</dbReference>
<dbReference type="EMBL" id="AK220368">
    <property type="protein sequence ID" value="BAD90248.1"/>
    <property type="status" value="ALT_INIT"/>
    <property type="molecule type" value="mRNA"/>
</dbReference>
<dbReference type="EMBL" id="AK155071">
    <property type="protein sequence ID" value="BAE33026.1"/>
    <property type="molecule type" value="mRNA"/>
</dbReference>
<dbReference type="EMBL" id="AK160992">
    <property type="protein sequence ID" value="BAE36137.1"/>
    <property type="molecule type" value="mRNA"/>
</dbReference>
<dbReference type="EMBL" id="AL646093">
    <property type="status" value="NOT_ANNOTATED_CDS"/>
    <property type="molecule type" value="Genomic_DNA"/>
</dbReference>
<dbReference type="EMBL" id="BC058419">
    <property type="protein sequence ID" value="AAH58419.1"/>
    <property type="molecule type" value="mRNA"/>
</dbReference>
<dbReference type="EMBL" id="BC080737">
    <property type="protein sequence ID" value="AAH80737.1"/>
    <property type="molecule type" value="mRNA"/>
</dbReference>
<dbReference type="CCDS" id="CCDS24807.1"/>
<dbReference type="RefSeq" id="NP_001004143.2">
    <property type="nucleotide sequence ID" value="NM_001004143.4"/>
</dbReference>
<dbReference type="SMR" id="Q5DU02"/>
<dbReference type="BioGRID" id="229796">
    <property type="interactions" value="8"/>
</dbReference>
<dbReference type="ComplexPortal" id="CPX-6803">
    <property type="entry name" value="SAGA complex, KAT2B variant"/>
</dbReference>
<dbReference type="ComplexPortal" id="CPX-916">
    <property type="entry name" value="TFTC histone acetylation complex"/>
</dbReference>
<dbReference type="ComplexPortal" id="CPX-920">
    <property type="entry name" value="SAGA complex, KAT2A variant"/>
</dbReference>
<dbReference type="FunCoup" id="Q5DU02">
    <property type="interactions" value="1670"/>
</dbReference>
<dbReference type="IntAct" id="Q5DU02">
    <property type="interactions" value="2"/>
</dbReference>
<dbReference type="MINT" id="Q5DU02"/>
<dbReference type="STRING" id="10090.ENSMUSP00000041263"/>
<dbReference type="MEROPS" id="C19.075"/>
<dbReference type="iPTMnet" id="Q5DU02"/>
<dbReference type="PhosphoSitePlus" id="Q5DU02"/>
<dbReference type="PaxDb" id="10090-ENSMUSP00000041263"/>
<dbReference type="PeptideAtlas" id="Q5DU02"/>
<dbReference type="ProteomicsDB" id="298409"/>
<dbReference type="Pumba" id="Q5DU02"/>
<dbReference type="Antibodypedia" id="26118">
    <property type="antibodies" value="342 antibodies from 33 providers"/>
</dbReference>
<dbReference type="DNASU" id="216825"/>
<dbReference type="Ensembl" id="ENSMUST00000041683.9">
    <property type="protein sequence ID" value="ENSMUSP00000041263.9"/>
    <property type="gene ID" value="ENSMUSG00000042506.16"/>
</dbReference>
<dbReference type="GeneID" id="216825"/>
<dbReference type="KEGG" id="mmu:216825"/>
<dbReference type="UCSC" id="uc007jhc.2">
    <property type="organism name" value="mouse"/>
</dbReference>
<dbReference type="AGR" id="MGI:2144157"/>
<dbReference type="CTD" id="23326"/>
<dbReference type="MGI" id="MGI:2144157">
    <property type="gene designation" value="Usp22"/>
</dbReference>
<dbReference type="VEuPathDB" id="HostDB:ENSMUSG00000042506"/>
<dbReference type="eggNOG" id="KOG1867">
    <property type="taxonomic scope" value="Eukaryota"/>
</dbReference>
<dbReference type="GeneTree" id="ENSGT00940000156623"/>
<dbReference type="HOGENOM" id="CLU_008279_11_0_1"/>
<dbReference type="InParanoid" id="Q5DU02"/>
<dbReference type="OMA" id="FLVCCGQ"/>
<dbReference type="OrthoDB" id="47475at2759"/>
<dbReference type="PhylomeDB" id="Q5DU02"/>
<dbReference type="TreeFam" id="TF323554"/>
<dbReference type="Reactome" id="R-MMU-5689880">
    <property type="pathway name" value="Ub-specific processing proteases"/>
</dbReference>
<dbReference type="BioGRID-ORCS" id="216825">
    <property type="hits" value="11 hits in 83 CRISPR screens"/>
</dbReference>
<dbReference type="ChiTaRS" id="Usp22">
    <property type="organism name" value="mouse"/>
</dbReference>
<dbReference type="PRO" id="PR:Q5DU02"/>
<dbReference type="Proteomes" id="UP000000589">
    <property type="component" value="Chromosome 11"/>
</dbReference>
<dbReference type="RNAct" id="Q5DU02">
    <property type="molecule type" value="protein"/>
</dbReference>
<dbReference type="Bgee" id="ENSMUSG00000042506">
    <property type="expression patterns" value="Expressed in cortical plate and 251 other cell types or tissues"/>
</dbReference>
<dbReference type="ExpressionAtlas" id="Q5DU02">
    <property type="expression patterns" value="baseline and differential"/>
</dbReference>
<dbReference type="GO" id="GO:0005737">
    <property type="term" value="C:cytoplasm"/>
    <property type="evidence" value="ECO:0007669"/>
    <property type="project" value="UniProtKB-SubCell"/>
</dbReference>
<dbReference type="GO" id="GO:0000124">
    <property type="term" value="C:SAGA complex"/>
    <property type="evidence" value="ECO:0000250"/>
    <property type="project" value="UniProtKB"/>
</dbReference>
<dbReference type="GO" id="GO:0033276">
    <property type="term" value="C:transcription factor TFTC complex"/>
    <property type="evidence" value="ECO:0000303"/>
    <property type="project" value="ComplexPortal"/>
</dbReference>
<dbReference type="GO" id="GO:0004843">
    <property type="term" value="F:cysteine-type deubiquitinase activity"/>
    <property type="evidence" value="ECO:0000314"/>
    <property type="project" value="MGI"/>
</dbReference>
<dbReference type="GO" id="GO:0019899">
    <property type="term" value="F:enzyme binding"/>
    <property type="evidence" value="ECO:0007669"/>
    <property type="project" value="Ensembl"/>
</dbReference>
<dbReference type="GO" id="GO:0140950">
    <property type="term" value="F:histone H2A deubiquitinase activity"/>
    <property type="evidence" value="ECO:0007669"/>
    <property type="project" value="Ensembl"/>
</dbReference>
<dbReference type="GO" id="GO:0140936">
    <property type="term" value="F:histone H2B deubiquitinase activity"/>
    <property type="evidence" value="ECO:0007669"/>
    <property type="project" value="Ensembl"/>
</dbReference>
<dbReference type="GO" id="GO:0010485">
    <property type="term" value="F:histone H4 acetyltransferase activity"/>
    <property type="evidence" value="ECO:0007669"/>
    <property type="project" value="Ensembl"/>
</dbReference>
<dbReference type="GO" id="GO:0003713">
    <property type="term" value="F:transcription coactivator activity"/>
    <property type="evidence" value="ECO:0007669"/>
    <property type="project" value="Ensembl"/>
</dbReference>
<dbReference type="GO" id="GO:0008270">
    <property type="term" value="F:zinc ion binding"/>
    <property type="evidence" value="ECO:0007669"/>
    <property type="project" value="UniProtKB-KW"/>
</dbReference>
<dbReference type="GO" id="GO:0000086">
    <property type="term" value="P:G2/M transition of mitotic cell cycle"/>
    <property type="evidence" value="ECO:0007669"/>
    <property type="project" value="Ensembl"/>
</dbReference>
<dbReference type="GO" id="GO:0045893">
    <property type="term" value="P:positive regulation of DNA-templated transcription"/>
    <property type="evidence" value="ECO:0000303"/>
    <property type="project" value="ComplexPortal"/>
</dbReference>
<dbReference type="GO" id="GO:0045931">
    <property type="term" value="P:positive regulation of mitotic cell cycle"/>
    <property type="evidence" value="ECO:0007669"/>
    <property type="project" value="Ensembl"/>
</dbReference>
<dbReference type="GO" id="GO:0032481">
    <property type="term" value="P:positive regulation of type I interferon production"/>
    <property type="evidence" value="ECO:0007669"/>
    <property type="project" value="Ensembl"/>
</dbReference>
<dbReference type="GO" id="GO:0016579">
    <property type="term" value="P:protein deubiquitination"/>
    <property type="evidence" value="ECO:0000314"/>
    <property type="project" value="MGI"/>
</dbReference>
<dbReference type="GO" id="GO:0006282">
    <property type="term" value="P:regulation of DNA repair"/>
    <property type="evidence" value="ECO:0000303"/>
    <property type="project" value="ComplexPortal"/>
</dbReference>
<dbReference type="GO" id="GO:0043484">
    <property type="term" value="P:regulation of RNA splicing"/>
    <property type="evidence" value="ECO:0000303"/>
    <property type="project" value="ComplexPortal"/>
</dbReference>
<dbReference type="GO" id="GO:0006357">
    <property type="term" value="P:regulation of transcription by RNA polymerase II"/>
    <property type="evidence" value="ECO:0000266"/>
    <property type="project" value="ComplexPortal"/>
</dbReference>
<dbReference type="GO" id="GO:0006511">
    <property type="term" value="P:ubiquitin-dependent protein catabolic process"/>
    <property type="evidence" value="ECO:0000305"/>
    <property type="project" value="MGI"/>
</dbReference>
<dbReference type="CDD" id="cd02660">
    <property type="entry name" value="Peptidase_C19D"/>
    <property type="match status" value="1"/>
</dbReference>
<dbReference type="FunFam" id="3.30.40.10:FF:000141">
    <property type="entry name" value="Ubiquitinyl hydrolase 1"/>
    <property type="match status" value="1"/>
</dbReference>
<dbReference type="FunFam" id="3.90.70.10:FF:000011">
    <property type="entry name" value="Ubiquitinyl hydrolase 1"/>
    <property type="match status" value="1"/>
</dbReference>
<dbReference type="Gene3D" id="3.90.70.10">
    <property type="entry name" value="Cysteine proteinases"/>
    <property type="match status" value="1"/>
</dbReference>
<dbReference type="Gene3D" id="3.30.40.10">
    <property type="entry name" value="Zinc/RING finger domain, C3HC4 (zinc finger)"/>
    <property type="match status" value="1"/>
</dbReference>
<dbReference type="InterPro" id="IPR038765">
    <property type="entry name" value="Papain-like_cys_pep_sf"/>
</dbReference>
<dbReference type="InterPro" id="IPR001394">
    <property type="entry name" value="Peptidase_C19_UCH"/>
</dbReference>
<dbReference type="InterPro" id="IPR050185">
    <property type="entry name" value="Ub_carboxyl-term_hydrolase"/>
</dbReference>
<dbReference type="InterPro" id="IPR018200">
    <property type="entry name" value="USP_CS"/>
</dbReference>
<dbReference type="InterPro" id="IPR028889">
    <property type="entry name" value="USP_dom"/>
</dbReference>
<dbReference type="InterPro" id="IPR013083">
    <property type="entry name" value="Znf_RING/FYVE/PHD"/>
</dbReference>
<dbReference type="InterPro" id="IPR001607">
    <property type="entry name" value="Znf_UBP"/>
</dbReference>
<dbReference type="PANTHER" id="PTHR21646">
    <property type="entry name" value="UBIQUITIN CARBOXYL-TERMINAL HYDROLASE"/>
    <property type="match status" value="1"/>
</dbReference>
<dbReference type="PANTHER" id="PTHR21646:SF40">
    <property type="entry name" value="UBIQUITIN CARBOXYL-TERMINAL HYDROLASE 22"/>
    <property type="match status" value="1"/>
</dbReference>
<dbReference type="Pfam" id="PF00443">
    <property type="entry name" value="UCH"/>
    <property type="match status" value="1"/>
</dbReference>
<dbReference type="Pfam" id="PF02148">
    <property type="entry name" value="zf-UBP"/>
    <property type="match status" value="1"/>
</dbReference>
<dbReference type="SUPFAM" id="SSF54001">
    <property type="entry name" value="Cysteine proteinases"/>
    <property type="match status" value="1"/>
</dbReference>
<dbReference type="SUPFAM" id="SSF57850">
    <property type="entry name" value="RING/U-box"/>
    <property type="match status" value="1"/>
</dbReference>
<dbReference type="PROSITE" id="PS00972">
    <property type="entry name" value="USP_1"/>
    <property type="match status" value="1"/>
</dbReference>
<dbReference type="PROSITE" id="PS00973">
    <property type="entry name" value="USP_2"/>
    <property type="match status" value="1"/>
</dbReference>
<dbReference type="PROSITE" id="PS50235">
    <property type="entry name" value="USP_3"/>
    <property type="match status" value="1"/>
</dbReference>
<dbReference type="PROSITE" id="PS50271">
    <property type="entry name" value="ZF_UBP"/>
    <property type="match status" value="1"/>
</dbReference>
<gene>
    <name type="primary">Usp22</name>
    <name type="synonym">Kiaa1063</name>
</gene>
<name>UBP22_MOUSE</name>
<organism>
    <name type="scientific">Mus musculus</name>
    <name type="common">Mouse</name>
    <dbReference type="NCBI Taxonomy" id="10090"/>
    <lineage>
        <taxon>Eukaryota</taxon>
        <taxon>Metazoa</taxon>
        <taxon>Chordata</taxon>
        <taxon>Craniata</taxon>
        <taxon>Vertebrata</taxon>
        <taxon>Euteleostomi</taxon>
        <taxon>Mammalia</taxon>
        <taxon>Eutheria</taxon>
        <taxon>Euarchontoglires</taxon>
        <taxon>Glires</taxon>
        <taxon>Rodentia</taxon>
        <taxon>Myomorpha</taxon>
        <taxon>Muroidea</taxon>
        <taxon>Muridae</taxon>
        <taxon>Murinae</taxon>
        <taxon>Mus</taxon>
        <taxon>Mus</taxon>
    </lineage>
</organism>
<feature type="chain" id="PRO_0000080651" description="Ubiquitin carboxyl-terminal hydrolase 22">
    <location>
        <begin position="1"/>
        <end position="525"/>
    </location>
</feature>
<feature type="domain" description="USP">
    <location>
        <begin position="176"/>
        <end position="520"/>
    </location>
</feature>
<feature type="zinc finger region" description="UBP-type" evidence="2">
    <location>
        <begin position="21"/>
        <end position="138"/>
    </location>
</feature>
<feature type="active site" description="Nucleophile" evidence="3 4">
    <location>
        <position position="185"/>
    </location>
</feature>
<feature type="active site" description="Proton acceptor" evidence="3 4">
    <location>
        <position position="479"/>
    </location>
</feature>
<feature type="binding site" evidence="2">
    <location>
        <position position="23"/>
    </location>
    <ligand>
        <name>Zn(2+)</name>
        <dbReference type="ChEBI" id="CHEBI:29105"/>
        <label>1</label>
    </ligand>
</feature>
<feature type="binding site" evidence="2">
    <location>
        <position position="25"/>
    </location>
    <ligand>
        <name>Zn(2+)</name>
        <dbReference type="ChEBI" id="CHEBI:29105"/>
        <label>1</label>
    </ligand>
</feature>
<feature type="binding site" evidence="2">
    <location>
        <position position="63"/>
    </location>
    <ligand>
        <name>Zn(2+)</name>
        <dbReference type="ChEBI" id="CHEBI:29105"/>
        <label>2</label>
    </ligand>
</feature>
<feature type="binding site" evidence="2">
    <location>
        <position position="66"/>
    </location>
    <ligand>
        <name>Zn(2+)</name>
        <dbReference type="ChEBI" id="CHEBI:29105"/>
        <label>2</label>
    </ligand>
</feature>
<feature type="binding site" evidence="2">
    <location>
        <position position="76"/>
    </location>
    <ligand>
        <name>Zn(2+)</name>
        <dbReference type="ChEBI" id="CHEBI:29105"/>
        <label>3</label>
    </ligand>
</feature>
<feature type="binding site" evidence="2">
    <location>
        <position position="79"/>
    </location>
    <ligand>
        <name>Zn(2+)</name>
        <dbReference type="ChEBI" id="CHEBI:29105"/>
        <label>3</label>
    </ligand>
</feature>
<feature type="binding site" evidence="2">
    <location>
        <position position="84"/>
    </location>
    <ligand>
        <name>Zn(2+)</name>
        <dbReference type="ChEBI" id="CHEBI:29105"/>
        <label>2</label>
    </ligand>
</feature>
<feature type="binding site" evidence="2">
    <location>
        <position position="89"/>
    </location>
    <ligand>
        <name>Zn(2+)</name>
        <dbReference type="ChEBI" id="CHEBI:29105"/>
        <label>2</label>
    </ligand>
</feature>
<feature type="binding site" evidence="2">
    <location>
        <position position="93"/>
    </location>
    <ligand>
        <name>Zn(2+)</name>
        <dbReference type="ChEBI" id="CHEBI:29105"/>
        <label>3</label>
    </ligand>
</feature>
<feature type="binding site" evidence="2">
    <location>
        <position position="99"/>
    </location>
    <ligand>
        <name>Zn(2+)</name>
        <dbReference type="ChEBI" id="CHEBI:29105"/>
        <label>3</label>
    </ligand>
</feature>
<feature type="binding site" evidence="2">
    <location>
        <position position="112"/>
    </location>
    <ligand>
        <name>Zn(2+)</name>
        <dbReference type="ChEBI" id="CHEBI:29105"/>
        <label>1</label>
    </ligand>
</feature>
<feature type="binding site" evidence="2">
    <location>
        <position position="115"/>
    </location>
    <ligand>
        <name>Zn(2+)</name>
        <dbReference type="ChEBI" id="CHEBI:29105"/>
        <label>1</label>
    </ligand>
</feature>
<feature type="modified residue" description="N6-acetyllysine" evidence="1">
    <location>
        <position position="129"/>
    </location>
</feature>
<feature type="modified residue" description="Phosphothreonine" evidence="1">
    <location>
        <position position="147"/>
    </location>
</feature>
<feature type="modified residue" description="Phosphoserine" evidence="1">
    <location>
        <position position="237"/>
    </location>
</feature>
<feature type="mutagenesis site" description="Complete loss of deubiquitinase activity." evidence="10">
    <original>C</original>
    <variation>S</variation>
    <location>
        <position position="185"/>
    </location>
</feature>
<feature type="sequence conflict" description="In Ref. 2; BAE36137." evidence="11" ref="2">
    <original>L</original>
    <variation>H</variation>
    <location>
        <position position="77"/>
    </location>
</feature>
<feature type="sequence conflict" description="In Ref. 4; AAH80737." evidence="11" ref="4">
    <original>N</original>
    <variation>D</variation>
    <location>
        <position position="188"/>
    </location>
</feature>